<dbReference type="EC" id="2.4.2.8" evidence="3"/>
<dbReference type="EMBL" id="AL766843">
    <property type="protein sequence ID" value="CAD45659.1"/>
    <property type="molecule type" value="Genomic_DNA"/>
</dbReference>
<dbReference type="RefSeq" id="WP_000892188.1">
    <property type="nucleotide sequence ID" value="NC_004368.1"/>
</dbReference>
<dbReference type="SMR" id="Q8E7Y1"/>
<dbReference type="GeneID" id="66884927"/>
<dbReference type="KEGG" id="san:gbs0014"/>
<dbReference type="eggNOG" id="COG0634">
    <property type="taxonomic scope" value="Bacteria"/>
</dbReference>
<dbReference type="HOGENOM" id="CLU_073615_0_0_9"/>
<dbReference type="UniPathway" id="UPA00591">
    <property type="reaction ID" value="UER00648"/>
</dbReference>
<dbReference type="UniPathway" id="UPA00909">
    <property type="reaction ID" value="UER00887"/>
</dbReference>
<dbReference type="Proteomes" id="UP000000823">
    <property type="component" value="Chromosome"/>
</dbReference>
<dbReference type="GO" id="GO:0005829">
    <property type="term" value="C:cytosol"/>
    <property type="evidence" value="ECO:0007669"/>
    <property type="project" value="TreeGrafter"/>
</dbReference>
<dbReference type="GO" id="GO:0052657">
    <property type="term" value="F:guanine phosphoribosyltransferase activity"/>
    <property type="evidence" value="ECO:0007669"/>
    <property type="project" value="RHEA"/>
</dbReference>
<dbReference type="GO" id="GO:0004422">
    <property type="term" value="F:hypoxanthine phosphoribosyltransferase activity"/>
    <property type="evidence" value="ECO:0007669"/>
    <property type="project" value="InterPro"/>
</dbReference>
<dbReference type="GO" id="GO:0000287">
    <property type="term" value="F:magnesium ion binding"/>
    <property type="evidence" value="ECO:0007669"/>
    <property type="project" value="TreeGrafter"/>
</dbReference>
<dbReference type="GO" id="GO:0000166">
    <property type="term" value="F:nucleotide binding"/>
    <property type="evidence" value="ECO:0007669"/>
    <property type="project" value="UniProtKB-KW"/>
</dbReference>
<dbReference type="GO" id="GO:0032263">
    <property type="term" value="P:GMP salvage"/>
    <property type="evidence" value="ECO:0007669"/>
    <property type="project" value="UniProtKB-UniPathway"/>
</dbReference>
<dbReference type="GO" id="GO:0006178">
    <property type="term" value="P:guanine salvage"/>
    <property type="evidence" value="ECO:0007669"/>
    <property type="project" value="TreeGrafter"/>
</dbReference>
<dbReference type="GO" id="GO:0046100">
    <property type="term" value="P:hypoxanthine metabolic process"/>
    <property type="evidence" value="ECO:0007669"/>
    <property type="project" value="TreeGrafter"/>
</dbReference>
<dbReference type="GO" id="GO:0032264">
    <property type="term" value="P:IMP salvage"/>
    <property type="evidence" value="ECO:0007669"/>
    <property type="project" value="UniProtKB-UniPathway"/>
</dbReference>
<dbReference type="GO" id="GO:0006166">
    <property type="term" value="P:purine ribonucleoside salvage"/>
    <property type="evidence" value="ECO:0007669"/>
    <property type="project" value="UniProtKB-KW"/>
</dbReference>
<dbReference type="CDD" id="cd06223">
    <property type="entry name" value="PRTases_typeI"/>
    <property type="match status" value="1"/>
</dbReference>
<dbReference type="FunFam" id="3.40.50.2020:FF:000006">
    <property type="entry name" value="Hypoxanthine phosphoribosyltransferase"/>
    <property type="match status" value="1"/>
</dbReference>
<dbReference type="Gene3D" id="3.40.50.2020">
    <property type="match status" value="1"/>
</dbReference>
<dbReference type="InterPro" id="IPR050408">
    <property type="entry name" value="HGPRT"/>
</dbReference>
<dbReference type="InterPro" id="IPR005904">
    <property type="entry name" value="Hxn_phspho_trans"/>
</dbReference>
<dbReference type="InterPro" id="IPR000836">
    <property type="entry name" value="PRibTrfase_dom"/>
</dbReference>
<dbReference type="InterPro" id="IPR029057">
    <property type="entry name" value="PRTase-like"/>
</dbReference>
<dbReference type="NCBIfam" id="TIGR01203">
    <property type="entry name" value="HGPRTase"/>
    <property type="match status" value="1"/>
</dbReference>
<dbReference type="PANTHER" id="PTHR43340:SF1">
    <property type="entry name" value="HYPOXANTHINE PHOSPHORIBOSYLTRANSFERASE"/>
    <property type="match status" value="1"/>
</dbReference>
<dbReference type="PANTHER" id="PTHR43340">
    <property type="entry name" value="HYPOXANTHINE-GUANINE PHOSPHORIBOSYLTRANSFERASE"/>
    <property type="match status" value="1"/>
</dbReference>
<dbReference type="Pfam" id="PF00156">
    <property type="entry name" value="Pribosyltran"/>
    <property type="match status" value="1"/>
</dbReference>
<dbReference type="SUPFAM" id="SSF53271">
    <property type="entry name" value="PRTase-like"/>
    <property type="match status" value="1"/>
</dbReference>
<keyword id="KW-0963">Cytoplasm</keyword>
<keyword id="KW-0328">Glycosyltransferase</keyword>
<keyword id="KW-0460">Magnesium</keyword>
<keyword id="KW-0479">Metal-binding</keyword>
<keyword id="KW-0547">Nucleotide-binding</keyword>
<keyword id="KW-0660">Purine salvage</keyword>
<keyword id="KW-0808">Transferase</keyword>
<evidence type="ECO:0000250" key="1"/>
<evidence type="ECO:0000250" key="2">
    <source>
        <dbReference type="UniProtKB" id="P0A9M2"/>
    </source>
</evidence>
<evidence type="ECO:0000250" key="3">
    <source>
        <dbReference type="UniProtKB" id="P9WHQ9"/>
    </source>
</evidence>
<evidence type="ECO:0000305" key="4"/>
<proteinExistence type="inferred from homology"/>
<reference key="1">
    <citation type="journal article" date="2002" name="Mol. Microbiol.">
        <title>Genome sequence of Streptococcus agalactiae, a pathogen causing invasive neonatal disease.</title>
        <authorList>
            <person name="Glaser P."/>
            <person name="Rusniok C."/>
            <person name="Buchrieser C."/>
            <person name="Chevalier F."/>
            <person name="Frangeul L."/>
            <person name="Msadek T."/>
            <person name="Zouine M."/>
            <person name="Couve E."/>
            <person name="Lalioui L."/>
            <person name="Poyart C."/>
            <person name="Trieu-Cuot P."/>
            <person name="Kunst F."/>
        </authorList>
    </citation>
    <scope>NUCLEOTIDE SEQUENCE [LARGE SCALE GENOMIC DNA]</scope>
    <source>
        <strain>NEM316</strain>
    </source>
</reference>
<feature type="chain" id="PRO_0000139620" description="Hypoxanthine-guanine phosphoribosyltransferase">
    <location>
        <begin position="1"/>
        <end position="180"/>
    </location>
</feature>
<feature type="active site" description="Proton acceptor" evidence="2">
    <location>
        <position position="103"/>
    </location>
</feature>
<feature type="binding site" evidence="3">
    <location>
        <position position="43"/>
    </location>
    <ligand>
        <name>diphosphate</name>
        <dbReference type="ChEBI" id="CHEBI:33019"/>
    </ligand>
</feature>
<feature type="binding site" evidence="3">
    <location>
        <position position="44"/>
    </location>
    <ligand>
        <name>diphosphate</name>
        <dbReference type="ChEBI" id="CHEBI:33019"/>
    </ligand>
</feature>
<feature type="binding site" evidence="3">
    <location>
        <position position="99"/>
    </location>
    <ligand>
        <name>Mg(2+)</name>
        <dbReference type="ChEBI" id="CHEBI:18420"/>
    </ligand>
</feature>
<feature type="binding site" evidence="3">
    <location>
        <position position="100"/>
    </location>
    <ligand>
        <name>Mg(2+)</name>
        <dbReference type="ChEBI" id="CHEBI:18420"/>
    </ligand>
</feature>
<feature type="binding site" evidence="3">
    <location>
        <position position="131"/>
    </location>
    <ligand>
        <name>GMP</name>
        <dbReference type="ChEBI" id="CHEBI:58115"/>
    </ligand>
</feature>
<feature type="binding site" evidence="3">
    <location>
        <begin position="152"/>
        <end position="153"/>
    </location>
    <ligand>
        <name>GMP</name>
        <dbReference type="ChEBI" id="CHEBI:58115"/>
    </ligand>
</feature>
<feature type="binding site" evidence="3">
    <location>
        <position position="159"/>
    </location>
    <ligand>
        <name>GMP</name>
        <dbReference type="ChEBI" id="CHEBI:58115"/>
    </ligand>
</feature>
<feature type="binding site" evidence="3">
    <location>
        <position position="165"/>
    </location>
    <ligand>
        <name>diphosphate</name>
        <dbReference type="ChEBI" id="CHEBI:33019"/>
    </ligand>
</feature>
<protein>
    <recommendedName>
        <fullName>Hypoxanthine-guanine phosphoribosyltransferase</fullName>
        <shortName>HGPRT</shortName>
        <shortName>HGPRTase</shortName>
        <ecNumber evidence="3">2.4.2.8</ecNumber>
    </recommendedName>
</protein>
<name>HGPRT_STRA3</name>
<gene>
    <name type="primary">hpt</name>
    <name type="ordered locus">gbs0014</name>
</gene>
<sequence length="180" mass="20383">MLENDIKKVLYSEEDIILKTKELGAKLTADYAGKNPLLVGVLKGSVPFMAELLKHIDTHVEIDFMVVSSYHGGTTSSGEVKILKDVDTNIEGRDVIFIEDIIDTGRTLKYLRDMFKYRQANSVKVATLFDKPEGRLVDIDADYVCYDIPNEFIVGFGLDYAENYRNLPYVGVLKEEIYSK</sequence>
<organism>
    <name type="scientific">Streptococcus agalactiae serotype III (strain NEM316)</name>
    <dbReference type="NCBI Taxonomy" id="211110"/>
    <lineage>
        <taxon>Bacteria</taxon>
        <taxon>Bacillati</taxon>
        <taxon>Bacillota</taxon>
        <taxon>Bacilli</taxon>
        <taxon>Lactobacillales</taxon>
        <taxon>Streptococcaceae</taxon>
        <taxon>Streptococcus</taxon>
    </lineage>
</organism>
<accession>Q8E7Y1</accession>
<comment type="function">
    <text evidence="3">Purine salvage pathway enzyme that catalyzes the transfer of the ribosyl-5-phosphate group from 5-phospho-alpha-D-ribose 1-diphosphate (PRPP) to the N9 position of the 6-oxopurines hypoxanthine and guanine to form the corresponding ribonucleotides IMP (inosine 5'-monophosphate) and GMP (guanosine 5'-monophosphate), with the release of PPi.</text>
</comment>
<comment type="catalytic activity">
    <reaction evidence="3">
        <text>IMP + diphosphate = hypoxanthine + 5-phospho-alpha-D-ribose 1-diphosphate</text>
        <dbReference type="Rhea" id="RHEA:17973"/>
        <dbReference type="ChEBI" id="CHEBI:17368"/>
        <dbReference type="ChEBI" id="CHEBI:33019"/>
        <dbReference type="ChEBI" id="CHEBI:58017"/>
        <dbReference type="ChEBI" id="CHEBI:58053"/>
        <dbReference type="EC" id="2.4.2.8"/>
    </reaction>
    <physiologicalReaction direction="right-to-left" evidence="3">
        <dbReference type="Rhea" id="RHEA:17975"/>
    </physiologicalReaction>
</comment>
<comment type="catalytic activity">
    <reaction evidence="3">
        <text>GMP + diphosphate = guanine + 5-phospho-alpha-D-ribose 1-diphosphate</text>
        <dbReference type="Rhea" id="RHEA:25424"/>
        <dbReference type="ChEBI" id="CHEBI:16235"/>
        <dbReference type="ChEBI" id="CHEBI:33019"/>
        <dbReference type="ChEBI" id="CHEBI:58017"/>
        <dbReference type="ChEBI" id="CHEBI:58115"/>
        <dbReference type="EC" id="2.4.2.8"/>
    </reaction>
    <physiologicalReaction direction="right-to-left" evidence="3">
        <dbReference type="Rhea" id="RHEA:25426"/>
    </physiologicalReaction>
</comment>
<comment type="cofactor">
    <cofactor evidence="3">
        <name>Mg(2+)</name>
        <dbReference type="ChEBI" id="CHEBI:18420"/>
    </cofactor>
</comment>
<comment type="pathway">
    <text evidence="3">Purine metabolism; IMP biosynthesis via salvage pathway; IMP from hypoxanthine: step 1/1.</text>
</comment>
<comment type="pathway">
    <text evidence="3">Purine metabolism; GMP biosynthesis via salvage pathway; GMP from guanine: step 1/1.</text>
</comment>
<comment type="subcellular location">
    <subcellularLocation>
        <location evidence="1">Cytoplasm</location>
    </subcellularLocation>
</comment>
<comment type="similarity">
    <text evidence="4">Belongs to the purine/pyrimidine phosphoribosyltransferase family.</text>
</comment>